<reference key="1">
    <citation type="journal article" date="2003" name="J. Virol. Methods">
        <title>An improved method for recovering rabies virus from cloned cDNA.</title>
        <authorList>
            <person name="Inoue K."/>
            <person name="Shoji Y."/>
            <person name="Kurane I."/>
            <person name="Iijima T."/>
            <person name="Sakai T."/>
            <person name="Morimoto K."/>
        </authorList>
    </citation>
    <scope>NUCLEOTIDE SEQUENCE [GENOMIC RNA]</scope>
</reference>
<gene>
    <name type="primary">P</name>
</gene>
<proteinExistence type="inferred from homology"/>
<protein>
    <recommendedName>
        <fullName>Phosphoprotein</fullName>
        <shortName>Protein P</shortName>
    </recommendedName>
    <alternativeName>
        <fullName>Protein M1</fullName>
    </alternativeName>
</protein>
<feature type="chain" id="PRO_0000295252" description="Phosphoprotein">
    <location>
        <begin position="1"/>
        <end position="297"/>
    </location>
</feature>
<feature type="region of interest" description="Disordered" evidence="3">
    <location>
        <begin position="133"/>
        <end position="176"/>
    </location>
</feature>
<feature type="region of interest" description="DYNLL1 and DYNLL2 binding" evidence="1">
    <location>
        <begin position="138"/>
        <end position="172"/>
    </location>
</feature>
<feature type="short sequence motif" description="Nuclear export signal" evidence="1">
    <location>
        <begin position="49"/>
        <end position="58"/>
    </location>
</feature>
<feature type="short sequence motif" description="Nuclear localization signal" evidence="1">
    <location>
        <begin position="211"/>
        <end position="214"/>
    </location>
</feature>
<feature type="compositionally biased region" description="Basic and acidic residues" evidence="3">
    <location>
        <begin position="140"/>
        <end position="157"/>
    </location>
</feature>
<feature type="compositionally biased region" description="Polar residues" evidence="3">
    <location>
        <begin position="158"/>
        <end position="169"/>
    </location>
</feature>
<feature type="modified residue" description="Phosphoserine; by host" evidence="1">
    <location>
        <position position="64"/>
    </location>
</feature>
<feature type="modified residue" description="Phosphoserine; by host PKC" evidence="1">
    <location>
        <position position="162"/>
    </location>
</feature>
<feature type="modified residue" description="Phosphoserine; by host PKC" evidence="1">
    <location>
        <position position="210"/>
    </location>
</feature>
<feature type="modified residue" description="Phosphoserine; by host PKC" evidence="1">
    <location>
        <position position="271"/>
    </location>
</feature>
<feature type="splice variant" id="VSP_026905" description="In isoform P5." evidence="4">
    <location>
        <begin position="1"/>
        <end position="82"/>
    </location>
</feature>
<feature type="splice variant" id="VSP_026906" description="In isoform P4." evidence="4">
    <location>
        <begin position="1"/>
        <end position="68"/>
    </location>
</feature>
<feature type="splice variant" id="VSP_026907" description="In isoform P3." evidence="4">
    <location>
        <begin position="1"/>
        <end position="52"/>
    </location>
</feature>
<feature type="splice variant" id="VSP_026908" description="In isoform P2." evidence="4">
    <location>
        <begin position="1"/>
        <end position="19"/>
    </location>
</feature>
<dbReference type="EMBL" id="AB085828">
    <property type="protein sequence ID" value="BAC53866.1"/>
    <property type="molecule type" value="Genomic_RNA"/>
</dbReference>
<dbReference type="SMR" id="Q8B6J8"/>
<dbReference type="Proteomes" id="UP000006846">
    <property type="component" value="Genome"/>
</dbReference>
<dbReference type="GO" id="GO:0043657">
    <property type="term" value="C:host cell"/>
    <property type="evidence" value="ECO:0007669"/>
    <property type="project" value="GOC"/>
</dbReference>
<dbReference type="GO" id="GO:0030430">
    <property type="term" value="C:host cell cytoplasm"/>
    <property type="evidence" value="ECO:0007669"/>
    <property type="project" value="UniProtKB-SubCell"/>
</dbReference>
<dbReference type="GO" id="GO:0042025">
    <property type="term" value="C:host cell nucleus"/>
    <property type="evidence" value="ECO:0007669"/>
    <property type="project" value="UniProtKB-SubCell"/>
</dbReference>
<dbReference type="GO" id="GO:0044423">
    <property type="term" value="C:virion component"/>
    <property type="evidence" value="ECO:0007669"/>
    <property type="project" value="UniProtKB-KW"/>
</dbReference>
<dbReference type="GO" id="GO:0003968">
    <property type="term" value="F:RNA-directed RNA polymerase activity"/>
    <property type="evidence" value="ECO:0007669"/>
    <property type="project" value="InterPro"/>
</dbReference>
<dbReference type="GO" id="GO:0075521">
    <property type="term" value="P:microtubule-dependent intracellular transport of viral material towards nucleus"/>
    <property type="evidence" value="ECO:0007669"/>
    <property type="project" value="UniProtKB-KW"/>
</dbReference>
<dbReference type="GO" id="GO:0046718">
    <property type="term" value="P:symbiont entry into host cell"/>
    <property type="evidence" value="ECO:0007669"/>
    <property type="project" value="UniProtKB-KW"/>
</dbReference>
<dbReference type="GO" id="GO:0039723">
    <property type="term" value="P:symbiont-mediated suppression of host cytoplasmic pattern recognition receptor signaling pathway via inhibition of TBK1 activity"/>
    <property type="evidence" value="ECO:0007669"/>
    <property type="project" value="UniProtKB-KW"/>
</dbReference>
<dbReference type="GO" id="GO:0039563">
    <property type="term" value="P:symbiont-mediated suppression of host JAK-STAT cascade via inhibition of STAT1 activity"/>
    <property type="evidence" value="ECO:0007669"/>
    <property type="project" value="UniProtKB-KW"/>
</dbReference>
<dbReference type="GO" id="GO:0039564">
    <property type="term" value="P:symbiont-mediated suppression of host JAK-STAT cascade via inhibition of STAT2 activity"/>
    <property type="evidence" value="ECO:0007669"/>
    <property type="project" value="UniProtKB-KW"/>
</dbReference>
<dbReference type="GO" id="GO:0039722">
    <property type="term" value="P:symbiont-mediated suppression of host toll-like receptor signaling pathway"/>
    <property type="evidence" value="ECO:0007669"/>
    <property type="project" value="UniProtKB-KW"/>
</dbReference>
<dbReference type="GO" id="GO:0039502">
    <property type="term" value="P:symbiont-mediated suppression of host type I interferon-mediated signaling pathway"/>
    <property type="evidence" value="ECO:0007669"/>
    <property type="project" value="UniProtKB-KW"/>
</dbReference>
<dbReference type="GO" id="GO:0019083">
    <property type="term" value="P:viral transcription"/>
    <property type="evidence" value="ECO:0007669"/>
    <property type="project" value="InterPro"/>
</dbReference>
<dbReference type="CDD" id="cd21032">
    <property type="entry name" value="RABV_P-protein-C_like"/>
    <property type="match status" value="1"/>
</dbReference>
<dbReference type="FunFam" id="1.20.120.820:FF:000001">
    <property type="entry name" value="Phosphoprotein"/>
    <property type="match status" value="1"/>
</dbReference>
<dbReference type="Gene3D" id="6.10.140.1560">
    <property type="match status" value="1"/>
</dbReference>
<dbReference type="Gene3D" id="1.20.120.820">
    <property type="entry name" value="Phosphoprotein, C-terminal domain"/>
    <property type="match status" value="1"/>
</dbReference>
<dbReference type="InterPro" id="IPR004259">
    <property type="entry name" value="PP_M1-like"/>
</dbReference>
<dbReference type="InterPro" id="IPR037199">
    <property type="entry name" value="PP_M1_C"/>
</dbReference>
<dbReference type="InterPro" id="IPR049506">
    <property type="entry name" value="RABV_P-like_C"/>
</dbReference>
<dbReference type="Pfam" id="PF03012">
    <property type="entry name" value="PP_M1"/>
    <property type="match status" value="1"/>
</dbReference>
<dbReference type="SUPFAM" id="SSF118173">
    <property type="entry name" value="Phosphoprotein M1, C-terminal domain"/>
    <property type="match status" value="1"/>
</dbReference>
<keyword id="KW-0024">Alternative initiation</keyword>
<keyword id="KW-0143">Chaperone</keyword>
<keyword id="KW-1176">Cytoplasmic inwards viral transport</keyword>
<keyword id="KW-1035">Host cytoplasm</keyword>
<keyword id="KW-1048">Host nucleus</keyword>
<keyword id="KW-0945">Host-virus interaction</keyword>
<keyword id="KW-1090">Inhibition of host innate immune response by virus</keyword>
<keyword id="KW-1114">Inhibition of host interferon signaling pathway by virus</keyword>
<keyword id="KW-1105">Inhibition of host STAT1 by virus</keyword>
<keyword id="KW-1106">Inhibition of host STAT2 by virus</keyword>
<keyword id="KW-1223">Inhibition of host TBK1 by virus</keyword>
<keyword id="KW-1225">Inhibition of host TLR pathway by virus</keyword>
<keyword id="KW-0922">Interferon antiviral system evasion</keyword>
<keyword id="KW-1177">Microtubular inwards viral transport</keyword>
<keyword id="KW-0597">Phosphoprotein</keyword>
<keyword id="KW-0899">Viral immunoevasion</keyword>
<keyword id="KW-0693">Viral RNA replication</keyword>
<keyword id="KW-0946">Virion</keyword>
<keyword id="KW-1160">Virus entry into host cell</keyword>
<evidence type="ECO:0000250" key="1"/>
<evidence type="ECO:0000250" key="2">
    <source>
        <dbReference type="UniProtKB" id="P16286"/>
    </source>
</evidence>
<evidence type="ECO:0000256" key="3">
    <source>
        <dbReference type="SAM" id="MobiDB-lite"/>
    </source>
</evidence>
<evidence type="ECO:0000305" key="4"/>
<accession>Q8B6J8</accession>
<name>PHOSP_RABVH</name>
<comment type="function">
    <text evidence="1 2">Non catalytic polymerase cofactor and regulatory protein that plays a role in viral transcription and replication. Stabilizes the RNA polymerase L to the N-RNA template and binds the soluble protein N, preventing it from encapsidating non-genomic RNA. Also inhibits host IFN-alpha and IFN-beta signaling by binding and retaining phosphorylated STAT1 in the cytoplasm or by inhibiting the DNA binding of STAT1 in the nucleus. Might be involved, through interaction with host dynein, in intracellular microtubule-dependent virus transport of incoming virus from the synapse toward the cell body (By similarity). Inhibits interferon induction pathways by interacting with host TBK1 and preventing the formation of dynamic cytoplasmic condensates that have liquid properties and that are essential for interferon production (By similarity).</text>
</comment>
<comment type="subunit">
    <molecule>Phosphoprotein</molecule>
    <text evidence="2">Homotrimer when phosphorylated. This trimer is stabilized by binding to the L protein. Binds soluble protein N, and ribonucleocapsid. Interacts with host DYNLL1 and DYNLL2; this interaction may play a role in intracellular microtubule-dependent virus transport of incoming virus. Interacts with host STAT1, STAT2 and PML. Interacts with host TBK1.</text>
</comment>
<comment type="subunit">
    <molecule>Isoform P3</molecule>
    <text evidence="1">Binds host PML.</text>
</comment>
<comment type="subcellular location">
    <molecule>Phosphoprotein</molecule>
    <subcellularLocation>
        <location>Virion</location>
    </subcellularLocation>
    <subcellularLocation>
        <location evidence="1">Host cytoplasm</location>
    </subcellularLocation>
</comment>
<comment type="subcellular location">
    <molecule>Isoform P2</molecule>
    <subcellularLocation>
        <location evidence="1">Host cytoplasm</location>
    </subcellularLocation>
</comment>
<comment type="subcellular location">
    <molecule>Isoform P3</molecule>
    <subcellularLocation>
        <location evidence="1">Host nucleus</location>
    </subcellularLocation>
</comment>
<comment type="subcellular location">
    <molecule>Isoform P4</molecule>
    <subcellularLocation>
        <location evidence="1">Host nucleus</location>
    </subcellularLocation>
</comment>
<comment type="subcellular location">
    <molecule>Isoform P5</molecule>
    <subcellularLocation>
        <location evidence="1">Host nucleus</location>
    </subcellularLocation>
</comment>
<comment type="alternative products">
    <event type="alternative initiation"/>
    <isoform>
        <id>Q8B6J8-1</id>
        <name>P</name>
        <sequence type="displayed"/>
    </isoform>
    <isoform>
        <id>Q8B6J8-2</id>
        <name>P2</name>
        <sequence type="described" ref="VSP_026908"/>
    </isoform>
    <isoform>
        <id>Q8B6J8-3</id>
        <name>P3</name>
        <sequence type="described" ref="VSP_026907"/>
    </isoform>
    <isoform>
        <id>Q8B6J8-4</id>
        <name>P4</name>
        <sequence type="described" ref="VSP_026906"/>
    </isoform>
    <isoform>
        <id>Q8B6J8-5</id>
        <name>P5</name>
        <sequence type="described" ref="VSP_026905"/>
    </isoform>
</comment>
<comment type="PTM">
    <text evidence="1">Phosphorylated by host PKC and by an unknown kinase.</text>
</comment>
<comment type="similarity">
    <text evidence="4">Belongs to the lyssavirus protein P family.</text>
</comment>
<sequence length="297" mass="33421">MSKIFVNPSAIRAGLADLEMAEETVDLINRNIEDNQAHLQGEPIEVDNLPEDMRQFHLDDEKLSNLGEMVRVGEGKYREDFQMNEGEDPNLLFQSYLDNVGVQIVRQMRSGERFLKIWSQTVEEIISYVSVNFPNPPGRSSEDKSTQTTGRELKKETTSILSQRESQPSKAGMVAQVASGPPSLEWSATNGEDDLSVEAEIAHQIAESFSKKYKFPSRSSGIFLYNFEQLEMNLDDIVKEAKNVPGVTRLAHDGSKIPLRCVLGWVALANSKKFQLLVEADKLSKIMQDDLDRYTSC</sequence>
<organismHost>
    <name type="scientific">Homo sapiens</name>
    <name type="common">Human</name>
    <dbReference type="NCBI Taxonomy" id="9606"/>
</organismHost>
<organismHost>
    <name type="scientific">Mammalia</name>
    <dbReference type="NCBI Taxonomy" id="40674"/>
</organismHost>
<organism>
    <name type="scientific">Rabies virus (strain HEP-Flury)</name>
    <name type="common">RABV</name>
    <dbReference type="NCBI Taxonomy" id="11296"/>
    <lineage>
        <taxon>Viruses</taxon>
        <taxon>Riboviria</taxon>
        <taxon>Orthornavirae</taxon>
        <taxon>Negarnaviricota</taxon>
        <taxon>Haploviricotina</taxon>
        <taxon>Monjiviricetes</taxon>
        <taxon>Mononegavirales</taxon>
        <taxon>Rhabdoviridae</taxon>
        <taxon>Alpharhabdovirinae</taxon>
        <taxon>Lyssavirus</taxon>
        <taxon>Lyssavirus rabies</taxon>
    </lineage>
</organism>